<protein>
    <recommendedName>
        <fullName evidence="1">Magnesium-protoporphyrin IX monomethyl ester [oxidative] cyclase</fullName>
        <shortName evidence="1">Mg-protoporphyrin IX monomethyl ester oxidative cyclase</shortName>
        <ecNumber evidence="1">1.14.13.81</ecNumber>
    </recommendedName>
</protein>
<proteinExistence type="inferred from homology"/>
<feature type="chain" id="PRO_1000070546" description="Magnesium-protoporphyrin IX monomethyl ester [oxidative] cyclase">
    <location>
        <begin position="1"/>
        <end position="390"/>
    </location>
</feature>
<sequence>MSKSTIEPKNKKSVNRGKEIAKDTILTPNFYTTDFEAMEKMDLSINEDELEAICEEFRKDYNRHHFVRNKEFEGAADKLDPETRELFVDFLEGSCTSEFSGFLLYKELSKRIKDKNPLLAECFAHMARDEARHAGFLNKSMNDFGLQLDLGFLTANKDYTYFPPRSIFYATYISEKIGYWRYIAIFRHLEKNPEGKIFPLFNFFENWCQDENRHGDFFDALMKAQPRSVKSLSNKITIGGSTFTHPLFDYFHRFRYFLNNHPFVSKLWSRFFLLAVFATMYIRDQGTKKDFYSALGLDAREYDQFVINKTNETSARVFPVVLNVFDDSFYRRLDSIVENGKRLSEIDKKDNQNLNKVLSKIPIFISNGYQLLRLYLLKPLDSKDYQPSIR</sequence>
<name>ACSF_PROM2</name>
<comment type="function">
    <text evidence="1">Catalyzes the formation of the isocyclic ring in chlorophyll biosynthesis. Mediates the cyclase reaction, which results in the formation of divinylprotochlorophyllide (Pchlide) characteristic of all chlorophylls from magnesium-protoporphyrin IX 13-monomethyl ester (MgPMME).</text>
</comment>
<comment type="catalytic activity">
    <reaction evidence="1">
        <text>Mg-protoporphyrin IX 13-monomethyl ester + 3 NADPH + 3 O2 + 2 H(+) = 3,8-divinyl protochlorophyllide a + 3 NADP(+) + 5 H2O</text>
        <dbReference type="Rhea" id="RHEA:33235"/>
        <dbReference type="ChEBI" id="CHEBI:15377"/>
        <dbReference type="ChEBI" id="CHEBI:15378"/>
        <dbReference type="ChEBI" id="CHEBI:15379"/>
        <dbReference type="ChEBI" id="CHEBI:57783"/>
        <dbReference type="ChEBI" id="CHEBI:58349"/>
        <dbReference type="ChEBI" id="CHEBI:58632"/>
        <dbReference type="ChEBI" id="CHEBI:60491"/>
        <dbReference type="EC" id="1.14.13.81"/>
    </reaction>
</comment>
<comment type="cofactor">
    <cofactor evidence="1">
        <name>Fe cation</name>
        <dbReference type="ChEBI" id="CHEBI:24875"/>
    </cofactor>
</comment>
<comment type="pathway">
    <text evidence="1">Porphyrin-containing compound metabolism; chlorophyll biosynthesis (light-independent).</text>
</comment>
<comment type="similarity">
    <text evidence="1">Belongs to the AcsF family.</text>
</comment>
<keyword id="KW-0149">Chlorophyll biosynthesis</keyword>
<keyword id="KW-0408">Iron</keyword>
<keyword id="KW-0479">Metal-binding</keyword>
<keyword id="KW-0521">NADP</keyword>
<keyword id="KW-0560">Oxidoreductase</keyword>
<keyword id="KW-0602">Photosynthesis</keyword>
<evidence type="ECO:0000255" key="1">
    <source>
        <dbReference type="HAMAP-Rule" id="MF_01840"/>
    </source>
</evidence>
<dbReference type="EC" id="1.14.13.81" evidence="1"/>
<dbReference type="EMBL" id="CP000825">
    <property type="protein sequence ID" value="ABV50672.1"/>
    <property type="molecule type" value="Genomic_DNA"/>
</dbReference>
<dbReference type="RefSeq" id="WP_012007757.1">
    <property type="nucleotide sequence ID" value="NC_009840.1"/>
</dbReference>
<dbReference type="STRING" id="93060.P9215_10571"/>
<dbReference type="KEGG" id="pmh:P9215_10571"/>
<dbReference type="eggNOG" id="COG1633">
    <property type="taxonomic scope" value="Bacteria"/>
</dbReference>
<dbReference type="HOGENOM" id="CLU_048037_0_0_3"/>
<dbReference type="OrthoDB" id="141643at2"/>
<dbReference type="UniPathway" id="UPA00670"/>
<dbReference type="Proteomes" id="UP000002014">
    <property type="component" value="Chromosome"/>
</dbReference>
<dbReference type="GO" id="GO:0005506">
    <property type="term" value="F:iron ion binding"/>
    <property type="evidence" value="ECO:0007669"/>
    <property type="project" value="UniProtKB-UniRule"/>
</dbReference>
<dbReference type="GO" id="GO:0048529">
    <property type="term" value="F:magnesium-protoporphyrin IX monomethyl ester (oxidative) cyclase activity"/>
    <property type="evidence" value="ECO:0007669"/>
    <property type="project" value="UniProtKB-UniRule"/>
</dbReference>
<dbReference type="GO" id="GO:0036068">
    <property type="term" value="P:light-independent chlorophyll biosynthetic process"/>
    <property type="evidence" value="ECO:0007669"/>
    <property type="project" value="UniProtKB-UniRule"/>
</dbReference>
<dbReference type="GO" id="GO:0015979">
    <property type="term" value="P:photosynthesis"/>
    <property type="evidence" value="ECO:0007669"/>
    <property type="project" value="UniProtKB-UniRule"/>
</dbReference>
<dbReference type="HAMAP" id="MF_01840">
    <property type="entry name" value="AcsF"/>
    <property type="match status" value="1"/>
</dbReference>
<dbReference type="InterPro" id="IPR008434">
    <property type="entry name" value="AcsF"/>
</dbReference>
<dbReference type="InterPro" id="IPR009078">
    <property type="entry name" value="Ferritin-like_SF"/>
</dbReference>
<dbReference type="InterPro" id="IPR003251">
    <property type="entry name" value="Rr_diiron-bd_dom"/>
</dbReference>
<dbReference type="NCBIfam" id="TIGR02029">
    <property type="entry name" value="AcsF"/>
    <property type="match status" value="1"/>
</dbReference>
<dbReference type="NCBIfam" id="NF010172">
    <property type="entry name" value="PRK13654.1"/>
    <property type="match status" value="1"/>
</dbReference>
<dbReference type="PANTHER" id="PTHR31053">
    <property type="entry name" value="MAGNESIUM-PROTOPORPHYRIN IX MONOMETHYL ESTER [OXIDATIVE] CYCLASE, CHLOROPLASTIC"/>
    <property type="match status" value="1"/>
</dbReference>
<dbReference type="PANTHER" id="PTHR31053:SF2">
    <property type="entry name" value="MAGNESIUM-PROTOPORPHYRIN IX MONOMETHYL ESTER [OXIDATIVE] CYCLASE, CHLOROPLASTIC"/>
    <property type="match status" value="1"/>
</dbReference>
<dbReference type="Pfam" id="PF02915">
    <property type="entry name" value="Rubrerythrin"/>
    <property type="match status" value="1"/>
</dbReference>
<dbReference type="SUPFAM" id="SSF47240">
    <property type="entry name" value="Ferritin-like"/>
    <property type="match status" value="1"/>
</dbReference>
<gene>
    <name evidence="1" type="primary">acsF</name>
    <name type="ordered locus">P9215_10571</name>
</gene>
<reference key="1">
    <citation type="journal article" date="2007" name="PLoS Genet.">
        <title>Patterns and implications of gene gain and loss in the evolution of Prochlorococcus.</title>
        <authorList>
            <person name="Kettler G.C."/>
            <person name="Martiny A.C."/>
            <person name="Huang K."/>
            <person name="Zucker J."/>
            <person name="Coleman M.L."/>
            <person name="Rodrigue S."/>
            <person name="Chen F."/>
            <person name="Lapidus A."/>
            <person name="Ferriera S."/>
            <person name="Johnson J."/>
            <person name="Steglich C."/>
            <person name="Church G.M."/>
            <person name="Richardson P."/>
            <person name="Chisholm S.W."/>
        </authorList>
    </citation>
    <scope>NUCLEOTIDE SEQUENCE [LARGE SCALE GENOMIC DNA]</scope>
    <source>
        <strain>MIT 9215</strain>
    </source>
</reference>
<accession>A8G4Z1</accession>
<organism>
    <name type="scientific">Prochlorococcus marinus (strain MIT 9215)</name>
    <dbReference type="NCBI Taxonomy" id="93060"/>
    <lineage>
        <taxon>Bacteria</taxon>
        <taxon>Bacillati</taxon>
        <taxon>Cyanobacteriota</taxon>
        <taxon>Cyanophyceae</taxon>
        <taxon>Synechococcales</taxon>
        <taxon>Prochlorococcaceae</taxon>
        <taxon>Prochlorococcus</taxon>
    </lineage>
</organism>